<proteinExistence type="inferred from homology"/>
<keyword id="KW-0108">Calcium channel impairing toxin</keyword>
<keyword id="KW-1015">Disulfide bond</keyword>
<keyword id="KW-0872">Ion channel impairing toxin</keyword>
<keyword id="KW-0964">Secreted</keyword>
<keyword id="KW-0732">Signal</keyword>
<keyword id="KW-0800">Toxin</keyword>
<keyword id="KW-0838">Vasoactive</keyword>
<keyword id="KW-0840">Vasodilator</keyword>
<keyword id="KW-1218">Voltage-gated calcium channel impairing toxin</keyword>
<comment type="function">
    <text evidence="3 5">Vasodilator protein that inhibits vasoconstriction of isolated rat femoral artery induced by phenylephrine (PubMed:18087067). Since platelet aggregation and vasoconstriction are key hemostatic responses, particularly in small wounds, this protein likely participates in the antihemostatic responses during blood feeding (By similarity). Blocks L-type calcium channels (Cav1/CACNA1) in left ventricular myocytes isolated from rat hearts (By similarity).</text>
</comment>
<comment type="subcellular location">
    <subcellularLocation>
        <location evidence="3">Secreted</location>
    </subcellularLocation>
</comment>
<comment type="tissue specificity">
    <text evidence="3">Expressed by the salivary gland.</text>
</comment>
<name>VASO1_TABYA</name>
<feature type="signal peptide" evidence="1 2">
    <location>
        <begin position="1"/>
        <end position="21"/>
    </location>
</feature>
<feature type="chain" id="PRO_5002910666" description="Vasotab-TY1" evidence="8">
    <location>
        <begin position="22"/>
        <end position="76"/>
    </location>
</feature>
<feature type="domain" description="Kazal-like" evidence="4">
    <location>
        <begin position="22"/>
        <end position="76"/>
    </location>
</feature>
<feature type="disulfide bond" evidence="3 4">
    <location>
        <begin position="23"/>
        <end position="60"/>
    </location>
</feature>
<feature type="disulfide bond" evidence="3 4">
    <location>
        <begin position="27"/>
        <end position="53"/>
    </location>
</feature>
<feature type="disulfide bond" evidence="3 4">
    <location>
        <begin position="35"/>
        <end position="75"/>
    </location>
</feature>
<sequence length="76" mass="8299">MKFTLFSVLVVLLIATFVAADDCPRICTADFRPVCGTPSGGRRSANRTFGNQCSLDSHNCLNKGDTYDKLHDGECK</sequence>
<organism evidence="9">
    <name type="scientific">Tabanus yao</name>
    <name type="common">Horsefly</name>
    <dbReference type="NCBI Taxonomy" id="485572"/>
    <lineage>
        <taxon>Eukaryota</taxon>
        <taxon>Metazoa</taxon>
        <taxon>Ecdysozoa</taxon>
        <taxon>Arthropoda</taxon>
        <taxon>Hexapoda</taxon>
        <taxon>Insecta</taxon>
        <taxon>Pterygota</taxon>
        <taxon>Neoptera</taxon>
        <taxon>Endopterygota</taxon>
        <taxon>Diptera</taxon>
        <taxon>Brachycera</taxon>
        <taxon>Tabanomorpha</taxon>
        <taxon>Tabanoidea</taxon>
        <taxon>Tabanidae</taxon>
        <taxon>Tabanus</taxon>
    </lineage>
</organism>
<reference evidence="9" key="1">
    <citation type="journal article" date="2008" name="Mol. Cell. Proteomics">
        <title>Toward an understanding of the molecular mechanism for successful blood feeding by coupling proteomics analysis with pharmacological testing of horsefly salivary glands.</title>
        <authorList>
            <person name="Xu X."/>
            <person name="Yang H."/>
            <person name="Ma D."/>
            <person name="Wu J."/>
            <person name="Wang Y."/>
            <person name="Song Y."/>
            <person name="Wang X."/>
            <person name="Lu Y."/>
            <person name="Yang J."/>
            <person name="Lai R."/>
        </authorList>
    </citation>
    <scope>NUCLEOTIDE SEQUENCE [MRNA]</scope>
    <scope>FUNCTION</scope>
    <scope>SYNTHESIS</scope>
    <source>
        <tissue>Salivary gland</tissue>
    </source>
</reference>
<reference key="2">
    <citation type="journal article" date="2009" name="Mol. Cell. Proteomics">
        <title>Anti-thrombosis repertoire of blood-feeding horsefly salivary glands.</title>
        <authorList>
            <person name="Ma D."/>
            <person name="Wang Y."/>
            <person name="Yang H."/>
            <person name="Wu J."/>
            <person name="An S."/>
            <person name="Gao L."/>
            <person name="Xu X."/>
            <person name="Lai R."/>
        </authorList>
    </citation>
    <scope>PURIFICATION</scope>
    <source>
        <tissue>Salivary gland</tissue>
    </source>
</reference>
<dbReference type="EMBL" id="EU147263">
    <property type="protein sequence ID" value="ABX80080.1"/>
    <property type="molecule type" value="mRNA"/>
</dbReference>
<dbReference type="SMR" id="C1IBZ2"/>
<dbReference type="GO" id="GO:0005576">
    <property type="term" value="C:extracellular region"/>
    <property type="evidence" value="ECO:0007669"/>
    <property type="project" value="UniProtKB-SubCell"/>
</dbReference>
<dbReference type="GO" id="GO:0005246">
    <property type="term" value="F:calcium channel regulator activity"/>
    <property type="evidence" value="ECO:0007669"/>
    <property type="project" value="UniProtKB-KW"/>
</dbReference>
<dbReference type="GO" id="GO:0090729">
    <property type="term" value="F:toxin activity"/>
    <property type="evidence" value="ECO:0007669"/>
    <property type="project" value="UniProtKB-KW"/>
</dbReference>
<dbReference type="GO" id="GO:0042311">
    <property type="term" value="P:vasodilation"/>
    <property type="evidence" value="ECO:0007669"/>
    <property type="project" value="UniProtKB-KW"/>
</dbReference>
<dbReference type="CDD" id="cd00104">
    <property type="entry name" value="KAZAL_FS"/>
    <property type="match status" value="1"/>
</dbReference>
<dbReference type="Gene3D" id="3.30.60.30">
    <property type="match status" value="1"/>
</dbReference>
<dbReference type="InterPro" id="IPR002350">
    <property type="entry name" value="Kazal_dom"/>
</dbReference>
<dbReference type="InterPro" id="IPR036058">
    <property type="entry name" value="Kazal_dom_sf"/>
</dbReference>
<dbReference type="Pfam" id="PF00050">
    <property type="entry name" value="Kazal_1"/>
    <property type="match status" value="1"/>
</dbReference>
<dbReference type="SMART" id="SM00280">
    <property type="entry name" value="KAZAL"/>
    <property type="match status" value="1"/>
</dbReference>
<dbReference type="SUPFAM" id="SSF100895">
    <property type="entry name" value="Kazal-type serine protease inhibitors"/>
    <property type="match status" value="1"/>
</dbReference>
<dbReference type="PROSITE" id="PS51465">
    <property type="entry name" value="KAZAL_2"/>
    <property type="match status" value="1"/>
</dbReference>
<accession>C1IBZ2</accession>
<protein>
    <recommendedName>
        <fullName evidence="7">Vasotab-TY1</fullName>
    </recommendedName>
    <alternativeName>
        <fullName evidence="6">Vasotab TY</fullName>
    </alternativeName>
</protein>
<evidence type="ECO:0000250" key="1">
    <source>
        <dbReference type="UniProtKB" id="C8YJB3"/>
    </source>
</evidence>
<evidence type="ECO:0000250" key="2">
    <source>
        <dbReference type="UniProtKB" id="C8YJB4"/>
    </source>
</evidence>
<evidence type="ECO:0000250" key="3">
    <source>
        <dbReference type="UniProtKB" id="P84843"/>
    </source>
</evidence>
<evidence type="ECO:0000255" key="4">
    <source>
        <dbReference type="PROSITE-ProRule" id="PRU00798"/>
    </source>
</evidence>
<evidence type="ECO:0000269" key="5">
    <source>
    </source>
</evidence>
<evidence type="ECO:0000303" key="6">
    <source>
    </source>
</evidence>
<evidence type="ECO:0000303" key="7">
    <source>
    </source>
</evidence>
<evidence type="ECO:0000305" key="8">
    <source>
    </source>
</evidence>
<evidence type="ECO:0000312" key="9">
    <source>
        <dbReference type="EMBL" id="ABX80080.1"/>
    </source>
</evidence>